<dbReference type="EMBL" id="CP000250">
    <property type="protein sequence ID" value="ABD07001.1"/>
    <property type="molecule type" value="Genomic_DNA"/>
</dbReference>
<dbReference type="RefSeq" id="WP_011441186.1">
    <property type="nucleotide sequence ID" value="NC_007778.1"/>
</dbReference>
<dbReference type="SMR" id="Q2IXQ9"/>
<dbReference type="STRING" id="316058.RPB_2296"/>
<dbReference type="KEGG" id="rpb:RPB_2296"/>
<dbReference type="eggNOG" id="COG0088">
    <property type="taxonomic scope" value="Bacteria"/>
</dbReference>
<dbReference type="HOGENOM" id="CLU_041575_5_1_5"/>
<dbReference type="OrthoDB" id="9803201at2"/>
<dbReference type="Proteomes" id="UP000008809">
    <property type="component" value="Chromosome"/>
</dbReference>
<dbReference type="GO" id="GO:1990904">
    <property type="term" value="C:ribonucleoprotein complex"/>
    <property type="evidence" value="ECO:0007669"/>
    <property type="project" value="UniProtKB-KW"/>
</dbReference>
<dbReference type="GO" id="GO:0005840">
    <property type="term" value="C:ribosome"/>
    <property type="evidence" value="ECO:0007669"/>
    <property type="project" value="UniProtKB-KW"/>
</dbReference>
<dbReference type="GO" id="GO:0019843">
    <property type="term" value="F:rRNA binding"/>
    <property type="evidence" value="ECO:0007669"/>
    <property type="project" value="UniProtKB-UniRule"/>
</dbReference>
<dbReference type="GO" id="GO:0003735">
    <property type="term" value="F:structural constituent of ribosome"/>
    <property type="evidence" value="ECO:0007669"/>
    <property type="project" value="InterPro"/>
</dbReference>
<dbReference type="GO" id="GO:0006412">
    <property type="term" value="P:translation"/>
    <property type="evidence" value="ECO:0007669"/>
    <property type="project" value="UniProtKB-UniRule"/>
</dbReference>
<dbReference type="Gene3D" id="3.40.1370.10">
    <property type="match status" value="1"/>
</dbReference>
<dbReference type="HAMAP" id="MF_01328_B">
    <property type="entry name" value="Ribosomal_uL4_B"/>
    <property type="match status" value="1"/>
</dbReference>
<dbReference type="InterPro" id="IPR002136">
    <property type="entry name" value="Ribosomal_uL4"/>
</dbReference>
<dbReference type="InterPro" id="IPR013005">
    <property type="entry name" value="Ribosomal_uL4-like"/>
</dbReference>
<dbReference type="InterPro" id="IPR023574">
    <property type="entry name" value="Ribosomal_uL4_dom_sf"/>
</dbReference>
<dbReference type="NCBIfam" id="TIGR03953">
    <property type="entry name" value="rplD_bact"/>
    <property type="match status" value="1"/>
</dbReference>
<dbReference type="PANTHER" id="PTHR10746">
    <property type="entry name" value="50S RIBOSOMAL PROTEIN L4"/>
    <property type="match status" value="1"/>
</dbReference>
<dbReference type="PANTHER" id="PTHR10746:SF6">
    <property type="entry name" value="LARGE RIBOSOMAL SUBUNIT PROTEIN UL4M"/>
    <property type="match status" value="1"/>
</dbReference>
<dbReference type="Pfam" id="PF00573">
    <property type="entry name" value="Ribosomal_L4"/>
    <property type="match status" value="1"/>
</dbReference>
<dbReference type="SUPFAM" id="SSF52166">
    <property type="entry name" value="Ribosomal protein L4"/>
    <property type="match status" value="1"/>
</dbReference>
<name>RL4_RHOP2</name>
<sequence length="206" mass="22136">MELKVTTLEGQEAGSVQLSDAIFGLEPRNDIVQRCVIWQLAKRQAGTHKAKGRAEVWRTGKKMYKQKGTGGARHGSQRVPQFRGGGRAFGPVVRSHAIDLPKKVRALALRHALSAKAKGGGLIVIDKAELEAAKTKALVGAFSGLGLTNALIIDGAEVNTGFATAARNIPNIDVLPIQGINVYDIVRRRKLVLTKAALDALEARFK</sequence>
<accession>Q2IXQ9</accession>
<organism>
    <name type="scientific">Rhodopseudomonas palustris (strain HaA2)</name>
    <dbReference type="NCBI Taxonomy" id="316058"/>
    <lineage>
        <taxon>Bacteria</taxon>
        <taxon>Pseudomonadati</taxon>
        <taxon>Pseudomonadota</taxon>
        <taxon>Alphaproteobacteria</taxon>
        <taxon>Hyphomicrobiales</taxon>
        <taxon>Nitrobacteraceae</taxon>
        <taxon>Rhodopseudomonas</taxon>
    </lineage>
</organism>
<gene>
    <name evidence="1" type="primary">rplD</name>
    <name type="ordered locus">RPB_2296</name>
</gene>
<feature type="chain" id="PRO_0000242427" description="Large ribosomal subunit protein uL4">
    <location>
        <begin position="1"/>
        <end position="206"/>
    </location>
</feature>
<keyword id="KW-1185">Reference proteome</keyword>
<keyword id="KW-0687">Ribonucleoprotein</keyword>
<keyword id="KW-0689">Ribosomal protein</keyword>
<keyword id="KW-0694">RNA-binding</keyword>
<keyword id="KW-0699">rRNA-binding</keyword>
<comment type="function">
    <text evidence="1">One of the primary rRNA binding proteins, this protein initially binds near the 5'-end of the 23S rRNA. It is important during the early stages of 50S assembly. It makes multiple contacts with different domains of the 23S rRNA in the assembled 50S subunit and ribosome.</text>
</comment>
<comment type="function">
    <text evidence="1">Forms part of the polypeptide exit tunnel.</text>
</comment>
<comment type="subunit">
    <text evidence="1">Part of the 50S ribosomal subunit.</text>
</comment>
<comment type="similarity">
    <text evidence="1">Belongs to the universal ribosomal protein uL4 family.</text>
</comment>
<protein>
    <recommendedName>
        <fullName evidence="1">Large ribosomal subunit protein uL4</fullName>
    </recommendedName>
    <alternativeName>
        <fullName evidence="2">50S ribosomal protein L4</fullName>
    </alternativeName>
</protein>
<evidence type="ECO:0000255" key="1">
    <source>
        <dbReference type="HAMAP-Rule" id="MF_01328"/>
    </source>
</evidence>
<evidence type="ECO:0000305" key="2"/>
<proteinExistence type="inferred from homology"/>
<reference key="1">
    <citation type="submission" date="2006-01" db="EMBL/GenBank/DDBJ databases">
        <title>Complete sequence of Rhodopseudomonas palustris HaA2.</title>
        <authorList>
            <consortium name="US DOE Joint Genome Institute"/>
            <person name="Copeland A."/>
            <person name="Lucas S."/>
            <person name="Lapidus A."/>
            <person name="Barry K."/>
            <person name="Detter J.C."/>
            <person name="Glavina T."/>
            <person name="Hammon N."/>
            <person name="Israni S."/>
            <person name="Pitluck S."/>
            <person name="Chain P."/>
            <person name="Malfatti S."/>
            <person name="Shin M."/>
            <person name="Vergez L."/>
            <person name="Schmutz J."/>
            <person name="Larimer F."/>
            <person name="Land M."/>
            <person name="Hauser L."/>
            <person name="Pelletier D.A."/>
            <person name="Kyrpides N."/>
            <person name="Anderson I."/>
            <person name="Oda Y."/>
            <person name="Harwood C.S."/>
            <person name="Richardson P."/>
        </authorList>
    </citation>
    <scope>NUCLEOTIDE SEQUENCE [LARGE SCALE GENOMIC DNA]</scope>
    <source>
        <strain>HaA2</strain>
    </source>
</reference>